<gene>
    <name evidence="1" type="primary">ybeY</name>
    <name type="ordered locus">NSE_0249</name>
</gene>
<evidence type="ECO:0000255" key="1">
    <source>
        <dbReference type="HAMAP-Rule" id="MF_00009"/>
    </source>
</evidence>
<keyword id="KW-0963">Cytoplasm</keyword>
<keyword id="KW-0255">Endonuclease</keyword>
<keyword id="KW-0378">Hydrolase</keyword>
<keyword id="KW-0479">Metal-binding</keyword>
<keyword id="KW-0540">Nuclease</keyword>
<keyword id="KW-0690">Ribosome biogenesis</keyword>
<keyword id="KW-0698">rRNA processing</keyword>
<keyword id="KW-0862">Zinc</keyword>
<proteinExistence type="inferred from homology"/>
<name>YBEY_NEOSM</name>
<organism>
    <name type="scientific">Neorickettsia sennetsu (strain ATCC VR-367 / Miyayama)</name>
    <name type="common">Ehrlichia sennetsu</name>
    <dbReference type="NCBI Taxonomy" id="222891"/>
    <lineage>
        <taxon>Bacteria</taxon>
        <taxon>Pseudomonadati</taxon>
        <taxon>Pseudomonadota</taxon>
        <taxon>Alphaproteobacteria</taxon>
        <taxon>Rickettsiales</taxon>
        <taxon>Anaplasmataceae</taxon>
        <taxon>Neorickettsia</taxon>
    </lineage>
</organism>
<dbReference type="EC" id="3.1.-.-" evidence="1"/>
<dbReference type="EMBL" id="CP000237">
    <property type="protein sequence ID" value="ABD45921.1"/>
    <property type="molecule type" value="Genomic_DNA"/>
</dbReference>
<dbReference type="RefSeq" id="WP_011451649.1">
    <property type="nucleotide sequence ID" value="NC_007798.1"/>
</dbReference>
<dbReference type="SMR" id="Q2GEF3"/>
<dbReference type="STRING" id="222891.NSE_0249"/>
<dbReference type="KEGG" id="nse:NSE_0249"/>
<dbReference type="eggNOG" id="COG0319">
    <property type="taxonomic scope" value="Bacteria"/>
</dbReference>
<dbReference type="HOGENOM" id="CLU_106710_0_0_5"/>
<dbReference type="OrthoDB" id="9807740at2"/>
<dbReference type="Proteomes" id="UP000001942">
    <property type="component" value="Chromosome"/>
</dbReference>
<dbReference type="GO" id="GO:0005737">
    <property type="term" value="C:cytoplasm"/>
    <property type="evidence" value="ECO:0007669"/>
    <property type="project" value="UniProtKB-SubCell"/>
</dbReference>
<dbReference type="GO" id="GO:0004222">
    <property type="term" value="F:metalloendopeptidase activity"/>
    <property type="evidence" value="ECO:0007669"/>
    <property type="project" value="InterPro"/>
</dbReference>
<dbReference type="GO" id="GO:0004521">
    <property type="term" value="F:RNA endonuclease activity"/>
    <property type="evidence" value="ECO:0007669"/>
    <property type="project" value="UniProtKB-UniRule"/>
</dbReference>
<dbReference type="GO" id="GO:0008270">
    <property type="term" value="F:zinc ion binding"/>
    <property type="evidence" value="ECO:0007669"/>
    <property type="project" value="UniProtKB-UniRule"/>
</dbReference>
<dbReference type="GO" id="GO:0006364">
    <property type="term" value="P:rRNA processing"/>
    <property type="evidence" value="ECO:0007669"/>
    <property type="project" value="UniProtKB-UniRule"/>
</dbReference>
<dbReference type="Gene3D" id="3.40.390.30">
    <property type="entry name" value="Metalloproteases ('zincins'), catalytic domain"/>
    <property type="match status" value="1"/>
</dbReference>
<dbReference type="HAMAP" id="MF_00009">
    <property type="entry name" value="Endoribonucl_YbeY"/>
    <property type="match status" value="1"/>
</dbReference>
<dbReference type="InterPro" id="IPR023091">
    <property type="entry name" value="MetalPrtase_cat_dom_sf_prd"/>
</dbReference>
<dbReference type="InterPro" id="IPR002036">
    <property type="entry name" value="YbeY"/>
</dbReference>
<dbReference type="NCBIfam" id="TIGR00043">
    <property type="entry name" value="rRNA maturation RNase YbeY"/>
    <property type="match status" value="1"/>
</dbReference>
<dbReference type="PANTHER" id="PTHR46986">
    <property type="entry name" value="ENDORIBONUCLEASE YBEY, CHLOROPLASTIC"/>
    <property type="match status" value="1"/>
</dbReference>
<dbReference type="PANTHER" id="PTHR46986:SF1">
    <property type="entry name" value="ENDORIBONUCLEASE YBEY, CHLOROPLASTIC"/>
    <property type="match status" value="1"/>
</dbReference>
<dbReference type="Pfam" id="PF02130">
    <property type="entry name" value="YbeY"/>
    <property type="match status" value="1"/>
</dbReference>
<dbReference type="SUPFAM" id="SSF55486">
    <property type="entry name" value="Metalloproteases ('zincins'), catalytic domain"/>
    <property type="match status" value="1"/>
</dbReference>
<sequence length="143" mass="16486">MLEIRITDPRWTKKLKNLDALLQKALECCLEGKKAEFSVVLTDDEFIRTLNKSYRGRDTPTNVLSFNYTNEQIGIGIIGEVILSFDRLVIEALENEIKFEDHLLHMFIHGVLHVLGYDHSSDRETLAMEKKEEEILKKLALLG</sequence>
<comment type="function">
    <text evidence="1">Single strand-specific metallo-endoribonuclease involved in late-stage 70S ribosome quality control and in maturation of the 3' terminus of the 16S rRNA.</text>
</comment>
<comment type="cofactor">
    <cofactor evidence="1">
        <name>Zn(2+)</name>
        <dbReference type="ChEBI" id="CHEBI:29105"/>
    </cofactor>
    <text evidence="1">Binds 1 zinc ion.</text>
</comment>
<comment type="subcellular location">
    <subcellularLocation>
        <location evidence="1">Cytoplasm</location>
    </subcellularLocation>
</comment>
<comment type="similarity">
    <text evidence="1">Belongs to the endoribonuclease YbeY family.</text>
</comment>
<accession>Q2GEF3</accession>
<protein>
    <recommendedName>
        <fullName evidence="1">Endoribonuclease YbeY</fullName>
        <ecNumber evidence="1">3.1.-.-</ecNumber>
    </recommendedName>
</protein>
<feature type="chain" id="PRO_0000284254" description="Endoribonuclease YbeY">
    <location>
        <begin position="1"/>
        <end position="143"/>
    </location>
</feature>
<feature type="binding site" evidence="1">
    <location>
        <position position="109"/>
    </location>
    <ligand>
        <name>Zn(2+)</name>
        <dbReference type="ChEBI" id="CHEBI:29105"/>
        <note>catalytic</note>
    </ligand>
</feature>
<feature type="binding site" evidence="1">
    <location>
        <position position="113"/>
    </location>
    <ligand>
        <name>Zn(2+)</name>
        <dbReference type="ChEBI" id="CHEBI:29105"/>
        <note>catalytic</note>
    </ligand>
</feature>
<feature type="binding site" evidence="1">
    <location>
        <position position="119"/>
    </location>
    <ligand>
        <name>Zn(2+)</name>
        <dbReference type="ChEBI" id="CHEBI:29105"/>
        <note>catalytic</note>
    </ligand>
</feature>
<reference key="1">
    <citation type="journal article" date="2006" name="PLoS Genet.">
        <title>Comparative genomics of emerging human ehrlichiosis agents.</title>
        <authorList>
            <person name="Dunning Hotopp J.C."/>
            <person name="Lin M."/>
            <person name="Madupu R."/>
            <person name="Crabtree J."/>
            <person name="Angiuoli S.V."/>
            <person name="Eisen J.A."/>
            <person name="Seshadri R."/>
            <person name="Ren Q."/>
            <person name="Wu M."/>
            <person name="Utterback T.R."/>
            <person name="Smith S."/>
            <person name="Lewis M."/>
            <person name="Khouri H."/>
            <person name="Zhang C."/>
            <person name="Niu H."/>
            <person name="Lin Q."/>
            <person name="Ohashi N."/>
            <person name="Zhi N."/>
            <person name="Nelson W.C."/>
            <person name="Brinkac L.M."/>
            <person name="Dodson R.J."/>
            <person name="Rosovitz M.J."/>
            <person name="Sundaram J.P."/>
            <person name="Daugherty S.C."/>
            <person name="Davidsen T."/>
            <person name="Durkin A.S."/>
            <person name="Gwinn M.L."/>
            <person name="Haft D.H."/>
            <person name="Selengut J.D."/>
            <person name="Sullivan S.A."/>
            <person name="Zafar N."/>
            <person name="Zhou L."/>
            <person name="Benahmed F."/>
            <person name="Forberger H."/>
            <person name="Halpin R."/>
            <person name="Mulligan S."/>
            <person name="Robinson J."/>
            <person name="White O."/>
            <person name="Rikihisa Y."/>
            <person name="Tettelin H."/>
        </authorList>
    </citation>
    <scope>NUCLEOTIDE SEQUENCE [LARGE SCALE GENOMIC DNA]</scope>
    <source>
        <strain>ATCC VR-367 / Miyayama</strain>
    </source>
</reference>